<protein>
    <recommendedName>
        <fullName>Uncharacterized protein RP697</fullName>
    </recommendedName>
</protein>
<organism>
    <name type="scientific">Rickettsia prowazekii (strain Madrid E)</name>
    <dbReference type="NCBI Taxonomy" id="272947"/>
    <lineage>
        <taxon>Bacteria</taxon>
        <taxon>Pseudomonadati</taxon>
        <taxon>Pseudomonadota</taxon>
        <taxon>Alphaproteobacteria</taxon>
        <taxon>Rickettsiales</taxon>
        <taxon>Rickettsiaceae</taxon>
        <taxon>Rickettsieae</taxon>
        <taxon>Rickettsia</taxon>
        <taxon>typhus group</taxon>
    </lineage>
</organism>
<feature type="signal peptide" evidence="1">
    <location>
        <begin position="1"/>
        <end position="19"/>
    </location>
</feature>
<feature type="chain" id="PRO_0000014227" description="Uncharacterized protein RP697">
    <location>
        <begin position="20"/>
        <end position="82"/>
    </location>
</feature>
<keyword id="KW-1185">Reference proteome</keyword>
<keyword id="KW-0732">Signal</keyword>
<reference key="1">
    <citation type="journal article" date="1998" name="Nature">
        <title>The genome sequence of Rickettsia prowazekii and the origin of mitochondria.</title>
        <authorList>
            <person name="Andersson S.G.E."/>
            <person name="Zomorodipour A."/>
            <person name="Andersson J.O."/>
            <person name="Sicheritz-Ponten T."/>
            <person name="Alsmark U.C.M."/>
            <person name="Podowski R.M."/>
            <person name="Naeslund A.K."/>
            <person name="Eriksson A.-S."/>
            <person name="Winkler H.H."/>
            <person name="Kurland C.G."/>
        </authorList>
    </citation>
    <scope>NUCLEOTIDE SEQUENCE [LARGE SCALE GENOMIC DNA]</scope>
    <source>
        <strain>Madrid E</strain>
    </source>
</reference>
<dbReference type="EMBL" id="AJ235272">
    <property type="protein sequence ID" value="CAA15133.1"/>
    <property type="molecule type" value="Genomic_DNA"/>
</dbReference>
<dbReference type="PIR" id="C71676">
    <property type="entry name" value="C71676"/>
</dbReference>
<dbReference type="RefSeq" id="NP_221057.1">
    <property type="nucleotide sequence ID" value="NC_000963.1"/>
</dbReference>
<dbReference type="RefSeq" id="WP_004598082.1">
    <property type="nucleotide sequence ID" value="NC_000963.1"/>
</dbReference>
<dbReference type="EnsemblBacteria" id="CAA15133">
    <property type="protein sequence ID" value="CAA15133"/>
    <property type="gene ID" value="CAA15133"/>
</dbReference>
<dbReference type="KEGG" id="rpr:RP697"/>
<dbReference type="PATRIC" id="fig|272947.5.peg.718"/>
<dbReference type="HOGENOM" id="CLU_194606_0_0_5"/>
<dbReference type="OrthoDB" id="7160633at2"/>
<dbReference type="Proteomes" id="UP000002480">
    <property type="component" value="Chromosome"/>
</dbReference>
<dbReference type="InterPro" id="IPR024247">
    <property type="entry name" value="DUF2673"/>
</dbReference>
<dbReference type="Pfam" id="PF10880">
    <property type="entry name" value="DUF2673"/>
    <property type="match status" value="1"/>
</dbReference>
<gene>
    <name type="ordered locus">RP697</name>
</gene>
<proteinExistence type="inferred from homology"/>
<sequence>MKNLLKILLIIAFANPVFASSMQMPDPASVTTTQIHAMSTNAQQDWIASLTANQYNMLSPDVQKWVMENTTDAQKQALGINQ</sequence>
<evidence type="ECO:0000255" key="1"/>
<name>Y697_RICPR</name>
<accession>Q9ZCM7</accession>